<reference key="1">
    <citation type="journal article" date="2007" name="J. Bacteriol.">
        <title>The genome sequence of avian pathogenic Escherichia coli strain O1:K1:H7 shares strong similarities with human extraintestinal pathogenic E. coli genomes.</title>
        <authorList>
            <person name="Johnson T.J."/>
            <person name="Kariyawasam S."/>
            <person name="Wannemuehler Y."/>
            <person name="Mangiamele P."/>
            <person name="Johnson S.J."/>
            <person name="Doetkott C."/>
            <person name="Skyberg J.A."/>
            <person name="Lynne A.M."/>
            <person name="Johnson J.R."/>
            <person name="Nolan L.K."/>
        </authorList>
    </citation>
    <scope>NUCLEOTIDE SEQUENCE [LARGE SCALE GENOMIC DNA]</scope>
</reference>
<sequence length="348" mass="38839">MTAPSQVLKIRRPDDWHLHLRDGDMLKTVVPYTSEIYGRAIVMPNLAPPVTTVEAAVAYRQRILDAVPAGHDFTPLMTCYLTDSLDPNELERGFNEGVFTAAKLYPANATTNSSHGVTSVDAIMPVLERMEKIGMPLLVHGEVTHADIDIFDREARFIESVMEPLRQRLTALKVVFEHITTKDAADYVRDGNERLAATITPQHLMFNRNHMLVGGVRPHLYCLPILKRNIHQQALRELVASGFNRVFLGTDSAPHARHRKESSCGCAGCFNAPTALGSYATVFEEMNALQYFEAFCSVNGPQFYGLPVNDTFIELVREEQQVAESIALTDDTLVPFLAGETVRWSVKQ</sequence>
<gene>
    <name evidence="1" type="primary">pyrC</name>
    <name type="ordered locus">Ecok1_09530</name>
    <name type="ORF">APECO1_144</name>
</gene>
<organism>
    <name type="scientific">Escherichia coli O1:K1 / APEC</name>
    <dbReference type="NCBI Taxonomy" id="405955"/>
    <lineage>
        <taxon>Bacteria</taxon>
        <taxon>Pseudomonadati</taxon>
        <taxon>Pseudomonadota</taxon>
        <taxon>Gammaproteobacteria</taxon>
        <taxon>Enterobacterales</taxon>
        <taxon>Enterobacteriaceae</taxon>
        <taxon>Escherichia</taxon>
    </lineage>
</organism>
<comment type="function">
    <text evidence="1">Catalyzes the reversible cyclization of carbamoyl aspartate to dihydroorotate.</text>
</comment>
<comment type="catalytic activity">
    <reaction evidence="1">
        <text>(S)-dihydroorotate + H2O = N-carbamoyl-L-aspartate + H(+)</text>
        <dbReference type="Rhea" id="RHEA:24296"/>
        <dbReference type="ChEBI" id="CHEBI:15377"/>
        <dbReference type="ChEBI" id="CHEBI:15378"/>
        <dbReference type="ChEBI" id="CHEBI:30864"/>
        <dbReference type="ChEBI" id="CHEBI:32814"/>
        <dbReference type="EC" id="3.5.2.3"/>
    </reaction>
</comment>
<comment type="cofactor">
    <cofactor evidence="1">
        <name>Zn(2+)</name>
        <dbReference type="ChEBI" id="CHEBI:29105"/>
    </cofactor>
    <text evidence="1">Binds 2 Zn(2+) ions per subunit.</text>
</comment>
<comment type="pathway">
    <text evidence="1">Pyrimidine metabolism; UMP biosynthesis via de novo pathway; (S)-dihydroorotate from bicarbonate: step 3/3.</text>
</comment>
<comment type="subunit">
    <text evidence="1">Homodimer.</text>
</comment>
<comment type="similarity">
    <text evidence="1">Belongs to the metallo-dependent hydrolases superfamily. DHOase family. Class II DHOase subfamily.</text>
</comment>
<evidence type="ECO:0000255" key="1">
    <source>
        <dbReference type="HAMAP-Rule" id="MF_00219"/>
    </source>
</evidence>
<name>PYRC_ECOK1</name>
<dbReference type="EC" id="3.5.2.3" evidence="1"/>
<dbReference type="EMBL" id="CP000468">
    <property type="protein sequence ID" value="ABJ00447.1"/>
    <property type="molecule type" value="Genomic_DNA"/>
</dbReference>
<dbReference type="RefSeq" id="WP_000126545.1">
    <property type="nucleotide sequence ID" value="NZ_CADILS010000019.1"/>
</dbReference>
<dbReference type="SMR" id="A1A9V7"/>
<dbReference type="MEROPS" id="M38.A02"/>
<dbReference type="KEGG" id="ecv:APECO1_144"/>
<dbReference type="HOGENOM" id="CLU_041558_1_0_6"/>
<dbReference type="UniPathway" id="UPA00070">
    <property type="reaction ID" value="UER00117"/>
</dbReference>
<dbReference type="Proteomes" id="UP000008216">
    <property type="component" value="Chromosome"/>
</dbReference>
<dbReference type="GO" id="GO:0005829">
    <property type="term" value="C:cytosol"/>
    <property type="evidence" value="ECO:0007669"/>
    <property type="project" value="TreeGrafter"/>
</dbReference>
<dbReference type="GO" id="GO:0004151">
    <property type="term" value="F:dihydroorotase activity"/>
    <property type="evidence" value="ECO:0007669"/>
    <property type="project" value="UniProtKB-UniRule"/>
</dbReference>
<dbReference type="GO" id="GO:0008270">
    <property type="term" value="F:zinc ion binding"/>
    <property type="evidence" value="ECO:0007669"/>
    <property type="project" value="UniProtKB-UniRule"/>
</dbReference>
<dbReference type="GO" id="GO:0006207">
    <property type="term" value="P:'de novo' pyrimidine nucleobase biosynthetic process"/>
    <property type="evidence" value="ECO:0007669"/>
    <property type="project" value="TreeGrafter"/>
</dbReference>
<dbReference type="GO" id="GO:0044205">
    <property type="term" value="P:'de novo' UMP biosynthetic process"/>
    <property type="evidence" value="ECO:0007669"/>
    <property type="project" value="UniProtKB-UniRule"/>
</dbReference>
<dbReference type="CDD" id="cd01294">
    <property type="entry name" value="DHOase"/>
    <property type="match status" value="1"/>
</dbReference>
<dbReference type="FunFam" id="3.20.20.140:FF:000006">
    <property type="entry name" value="Dihydroorotase"/>
    <property type="match status" value="1"/>
</dbReference>
<dbReference type="Gene3D" id="3.20.20.140">
    <property type="entry name" value="Metal-dependent hydrolases"/>
    <property type="match status" value="1"/>
</dbReference>
<dbReference type="HAMAP" id="MF_00219">
    <property type="entry name" value="PyrC_classII"/>
    <property type="match status" value="1"/>
</dbReference>
<dbReference type="InterPro" id="IPR006680">
    <property type="entry name" value="Amidohydro-rel"/>
</dbReference>
<dbReference type="InterPro" id="IPR004721">
    <property type="entry name" value="DHOdimr"/>
</dbReference>
<dbReference type="InterPro" id="IPR002195">
    <property type="entry name" value="Dihydroorotase_CS"/>
</dbReference>
<dbReference type="InterPro" id="IPR032466">
    <property type="entry name" value="Metal_Hydrolase"/>
</dbReference>
<dbReference type="NCBIfam" id="TIGR00856">
    <property type="entry name" value="pyrC_dimer"/>
    <property type="match status" value="1"/>
</dbReference>
<dbReference type="PANTHER" id="PTHR43137">
    <property type="entry name" value="DIHYDROOROTASE"/>
    <property type="match status" value="1"/>
</dbReference>
<dbReference type="PANTHER" id="PTHR43137:SF1">
    <property type="entry name" value="DIHYDROOROTASE"/>
    <property type="match status" value="1"/>
</dbReference>
<dbReference type="Pfam" id="PF01979">
    <property type="entry name" value="Amidohydro_1"/>
    <property type="match status" value="1"/>
</dbReference>
<dbReference type="PIRSF" id="PIRSF001237">
    <property type="entry name" value="DHOdimr"/>
    <property type="match status" value="1"/>
</dbReference>
<dbReference type="SUPFAM" id="SSF51556">
    <property type="entry name" value="Metallo-dependent hydrolases"/>
    <property type="match status" value="1"/>
</dbReference>
<dbReference type="PROSITE" id="PS00482">
    <property type="entry name" value="DIHYDROOROTASE_1"/>
    <property type="match status" value="1"/>
</dbReference>
<dbReference type="PROSITE" id="PS00483">
    <property type="entry name" value="DIHYDROOROTASE_2"/>
    <property type="match status" value="1"/>
</dbReference>
<proteinExistence type="inferred from homology"/>
<keyword id="KW-0378">Hydrolase</keyword>
<keyword id="KW-0479">Metal-binding</keyword>
<keyword id="KW-0665">Pyrimidine biosynthesis</keyword>
<keyword id="KW-1185">Reference proteome</keyword>
<keyword id="KW-0862">Zinc</keyword>
<protein>
    <recommendedName>
        <fullName evidence="1">Dihydroorotase</fullName>
        <shortName evidence="1">DHOase</shortName>
        <ecNumber evidence="1">3.5.2.3</ecNumber>
    </recommendedName>
</protein>
<feature type="chain" id="PRO_1000024009" description="Dihydroorotase">
    <location>
        <begin position="1"/>
        <end position="348"/>
    </location>
</feature>
<feature type="active site" evidence="1">
    <location>
        <position position="251"/>
    </location>
</feature>
<feature type="binding site" evidence="1">
    <location>
        <position position="17"/>
    </location>
    <ligand>
        <name>Zn(2+)</name>
        <dbReference type="ChEBI" id="CHEBI:29105"/>
        <label>1</label>
    </ligand>
</feature>
<feature type="binding site" evidence="1">
    <location>
        <begin position="19"/>
        <end position="21"/>
    </location>
    <ligand>
        <name>substrate</name>
    </ligand>
</feature>
<feature type="binding site" evidence="1">
    <location>
        <position position="19"/>
    </location>
    <ligand>
        <name>Zn(2+)</name>
        <dbReference type="ChEBI" id="CHEBI:29105"/>
        <label>1</label>
    </ligand>
</feature>
<feature type="binding site" evidence="1">
    <location>
        <position position="45"/>
    </location>
    <ligand>
        <name>substrate</name>
    </ligand>
</feature>
<feature type="binding site" description="via carbamate group" evidence="1">
    <location>
        <position position="103"/>
    </location>
    <ligand>
        <name>Zn(2+)</name>
        <dbReference type="ChEBI" id="CHEBI:29105"/>
        <label>1</label>
    </ligand>
</feature>
<feature type="binding site" description="via carbamate group" evidence="1">
    <location>
        <position position="103"/>
    </location>
    <ligand>
        <name>Zn(2+)</name>
        <dbReference type="ChEBI" id="CHEBI:29105"/>
        <label>2</label>
    </ligand>
</feature>
<feature type="binding site" evidence="1">
    <location>
        <position position="140"/>
    </location>
    <ligand>
        <name>substrate</name>
    </ligand>
</feature>
<feature type="binding site" evidence="1">
    <location>
        <position position="140"/>
    </location>
    <ligand>
        <name>Zn(2+)</name>
        <dbReference type="ChEBI" id="CHEBI:29105"/>
        <label>2</label>
    </ligand>
</feature>
<feature type="binding site" evidence="1">
    <location>
        <position position="178"/>
    </location>
    <ligand>
        <name>Zn(2+)</name>
        <dbReference type="ChEBI" id="CHEBI:29105"/>
        <label>2</label>
    </ligand>
</feature>
<feature type="binding site" evidence="1">
    <location>
        <position position="223"/>
    </location>
    <ligand>
        <name>substrate</name>
    </ligand>
</feature>
<feature type="binding site" evidence="1">
    <location>
        <position position="251"/>
    </location>
    <ligand>
        <name>Zn(2+)</name>
        <dbReference type="ChEBI" id="CHEBI:29105"/>
        <label>1</label>
    </ligand>
</feature>
<feature type="binding site" evidence="1">
    <location>
        <position position="255"/>
    </location>
    <ligand>
        <name>substrate</name>
    </ligand>
</feature>
<feature type="binding site" evidence="1">
    <location>
        <position position="267"/>
    </location>
    <ligand>
        <name>substrate</name>
    </ligand>
</feature>
<feature type="modified residue" description="N6-carboxylysine" evidence="1">
    <location>
        <position position="103"/>
    </location>
</feature>
<accession>A1A9V7</accession>